<protein>
    <recommendedName>
        <fullName evidence="1">Probable dual-specificity RNA methyltransferase RlmN</fullName>
        <ecNumber evidence="1">2.1.1.192</ecNumber>
    </recommendedName>
    <alternativeName>
        <fullName evidence="1">23S rRNA (adenine(2503)-C(2))-methyltransferase</fullName>
    </alternativeName>
    <alternativeName>
        <fullName evidence="1">23S rRNA m2A2503 methyltransferase</fullName>
    </alternativeName>
    <alternativeName>
        <fullName evidence="1">Ribosomal RNA large subunit methyltransferase N</fullName>
    </alternativeName>
    <alternativeName>
        <fullName evidence="1">tRNA (adenine(37)-C(2))-methyltransferase</fullName>
    </alternativeName>
    <alternativeName>
        <fullName evidence="1">tRNA m2A37 methyltransferase</fullName>
    </alternativeName>
</protein>
<organism>
    <name type="scientific">Lachnospira eligens (strain ATCC 27750 / DSM 3376 / VPI C15-48 / C15-B4)</name>
    <name type="common">Eubacterium eligens</name>
    <dbReference type="NCBI Taxonomy" id="515620"/>
    <lineage>
        <taxon>Bacteria</taxon>
        <taxon>Bacillati</taxon>
        <taxon>Bacillota</taxon>
        <taxon>Clostridia</taxon>
        <taxon>Lachnospirales</taxon>
        <taxon>Lachnospiraceae</taxon>
        <taxon>Lachnospira</taxon>
    </lineage>
</organism>
<dbReference type="EC" id="2.1.1.192" evidence="1"/>
<dbReference type="EMBL" id="CP001104">
    <property type="protein sequence ID" value="ACR71727.1"/>
    <property type="molecule type" value="Genomic_DNA"/>
</dbReference>
<dbReference type="RefSeq" id="WP_012738963.1">
    <property type="nucleotide sequence ID" value="NC_012778.1"/>
</dbReference>
<dbReference type="SMR" id="C4Z523"/>
<dbReference type="STRING" id="515620.EUBELI_00719"/>
<dbReference type="GeneID" id="41355463"/>
<dbReference type="KEGG" id="eel:EUBELI_00719"/>
<dbReference type="eggNOG" id="COG0820">
    <property type="taxonomic scope" value="Bacteria"/>
</dbReference>
<dbReference type="HOGENOM" id="CLU_029101_2_0_9"/>
<dbReference type="Proteomes" id="UP000001476">
    <property type="component" value="Chromosome"/>
</dbReference>
<dbReference type="GO" id="GO:0005737">
    <property type="term" value="C:cytoplasm"/>
    <property type="evidence" value="ECO:0007669"/>
    <property type="project" value="UniProtKB-SubCell"/>
</dbReference>
<dbReference type="GO" id="GO:0051539">
    <property type="term" value="F:4 iron, 4 sulfur cluster binding"/>
    <property type="evidence" value="ECO:0007669"/>
    <property type="project" value="UniProtKB-UniRule"/>
</dbReference>
<dbReference type="GO" id="GO:0046872">
    <property type="term" value="F:metal ion binding"/>
    <property type="evidence" value="ECO:0007669"/>
    <property type="project" value="UniProtKB-KW"/>
</dbReference>
<dbReference type="GO" id="GO:0070040">
    <property type="term" value="F:rRNA (adenine(2503)-C2-)-methyltransferase activity"/>
    <property type="evidence" value="ECO:0007669"/>
    <property type="project" value="UniProtKB-UniRule"/>
</dbReference>
<dbReference type="GO" id="GO:0019843">
    <property type="term" value="F:rRNA binding"/>
    <property type="evidence" value="ECO:0007669"/>
    <property type="project" value="UniProtKB-UniRule"/>
</dbReference>
<dbReference type="GO" id="GO:0002935">
    <property type="term" value="F:tRNA (adenine(37)-C2)-methyltransferase activity"/>
    <property type="evidence" value="ECO:0007669"/>
    <property type="project" value="UniProtKB-UniRule"/>
</dbReference>
<dbReference type="GO" id="GO:0000049">
    <property type="term" value="F:tRNA binding"/>
    <property type="evidence" value="ECO:0007669"/>
    <property type="project" value="UniProtKB-UniRule"/>
</dbReference>
<dbReference type="GO" id="GO:0070475">
    <property type="term" value="P:rRNA base methylation"/>
    <property type="evidence" value="ECO:0007669"/>
    <property type="project" value="UniProtKB-UniRule"/>
</dbReference>
<dbReference type="GO" id="GO:0030488">
    <property type="term" value="P:tRNA methylation"/>
    <property type="evidence" value="ECO:0007669"/>
    <property type="project" value="UniProtKB-UniRule"/>
</dbReference>
<dbReference type="CDD" id="cd01335">
    <property type="entry name" value="Radical_SAM"/>
    <property type="match status" value="1"/>
</dbReference>
<dbReference type="FunFam" id="3.20.20.70:FF:000014">
    <property type="entry name" value="Probable dual-specificity RNA methyltransferase RlmN"/>
    <property type="match status" value="1"/>
</dbReference>
<dbReference type="Gene3D" id="1.10.150.530">
    <property type="match status" value="1"/>
</dbReference>
<dbReference type="Gene3D" id="3.20.20.70">
    <property type="entry name" value="Aldolase class I"/>
    <property type="match status" value="1"/>
</dbReference>
<dbReference type="HAMAP" id="MF_01849">
    <property type="entry name" value="RNA_methyltr_RlmN"/>
    <property type="match status" value="1"/>
</dbReference>
<dbReference type="InterPro" id="IPR013785">
    <property type="entry name" value="Aldolase_TIM"/>
</dbReference>
<dbReference type="InterPro" id="IPR006638">
    <property type="entry name" value="Elp3/MiaA/NifB-like_rSAM"/>
</dbReference>
<dbReference type="InterPro" id="IPR040072">
    <property type="entry name" value="Methyltransferase_A"/>
</dbReference>
<dbReference type="InterPro" id="IPR048641">
    <property type="entry name" value="RlmN_N"/>
</dbReference>
<dbReference type="InterPro" id="IPR027492">
    <property type="entry name" value="RNA_MTrfase_RlmN"/>
</dbReference>
<dbReference type="InterPro" id="IPR004383">
    <property type="entry name" value="rRNA_lsu_MTrfase_RlmN/Cfr"/>
</dbReference>
<dbReference type="InterPro" id="IPR007197">
    <property type="entry name" value="rSAM"/>
</dbReference>
<dbReference type="NCBIfam" id="TIGR00048">
    <property type="entry name" value="rRNA_mod_RlmN"/>
    <property type="match status" value="1"/>
</dbReference>
<dbReference type="PANTHER" id="PTHR30544">
    <property type="entry name" value="23S RRNA METHYLTRANSFERASE"/>
    <property type="match status" value="1"/>
</dbReference>
<dbReference type="PANTHER" id="PTHR30544:SF5">
    <property type="entry name" value="RADICAL SAM CORE DOMAIN-CONTAINING PROTEIN"/>
    <property type="match status" value="1"/>
</dbReference>
<dbReference type="Pfam" id="PF04055">
    <property type="entry name" value="Radical_SAM"/>
    <property type="match status" value="1"/>
</dbReference>
<dbReference type="Pfam" id="PF21016">
    <property type="entry name" value="RlmN_N"/>
    <property type="match status" value="1"/>
</dbReference>
<dbReference type="PIRSF" id="PIRSF006004">
    <property type="entry name" value="CHP00048"/>
    <property type="match status" value="1"/>
</dbReference>
<dbReference type="SFLD" id="SFLDF00275">
    <property type="entry name" value="adenosine_C2_methyltransferase"/>
    <property type="match status" value="1"/>
</dbReference>
<dbReference type="SFLD" id="SFLDS00029">
    <property type="entry name" value="Radical_SAM"/>
    <property type="match status" value="1"/>
</dbReference>
<dbReference type="SMART" id="SM00729">
    <property type="entry name" value="Elp3"/>
    <property type="match status" value="1"/>
</dbReference>
<dbReference type="SUPFAM" id="SSF102114">
    <property type="entry name" value="Radical SAM enzymes"/>
    <property type="match status" value="1"/>
</dbReference>
<dbReference type="PROSITE" id="PS51918">
    <property type="entry name" value="RADICAL_SAM"/>
    <property type="match status" value="1"/>
</dbReference>
<sequence length="350" mass="40047">MTDIKSLNYDELVTYMAGLGEKKFRAGQLYQWMHEKLADSFDECTNLSNALRQKLKETSEYVCLEPVRVQHSKLDGTEKYLFRLSDGNYVESVLMKYHHGNSVCISSQVGCRMGCRFCASTLNGKVRDLRPSEMLDQIYRIQKITGERVSNVVVMGSGEPMDNYDNLIKFIELLNDERGLNISQRNITVSSCGIVPKLKELADLKLQITLAISLHAPNDELRKTMMPIANKYSIEEIMDVCRYYIECTGRRISFEYSLVKGVNDSMECAKQLIELVKGMNCHINLIPVNPIKERDYKQTGKEEVYAFKNKLEKNGINVTIRREMGRDIDGACGQLRNKYMEDIDESDGGY</sequence>
<feature type="chain" id="PRO_1000216119" description="Probable dual-specificity RNA methyltransferase RlmN">
    <location>
        <begin position="1"/>
        <end position="350"/>
    </location>
</feature>
<feature type="domain" description="Radical SAM core" evidence="2">
    <location>
        <begin position="97"/>
        <end position="327"/>
    </location>
</feature>
<feature type="active site" description="Proton acceptor" evidence="1">
    <location>
        <position position="91"/>
    </location>
</feature>
<feature type="active site" description="S-methylcysteine intermediate" evidence="1">
    <location>
        <position position="332"/>
    </location>
</feature>
<feature type="binding site" evidence="1">
    <location>
        <position position="111"/>
    </location>
    <ligand>
        <name>[4Fe-4S] cluster</name>
        <dbReference type="ChEBI" id="CHEBI:49883"/>
        <note>4Fe-4S-S-AdoMet</note>
    </ligand>
</feature>
<feature type="binding site" evidence="1">
    <location>
        <position position="115"/>
    </location>
    <ligand>
        <name>[4Fe-4S] cluster</name>
        <dbReference type="ChEBI" id="CHEBI:49883"/>
        <note>4Fe-4S-S-AdoMet</note>
    </ligand>
</feature>
<feature type="binding site" evidence="1">
    <location>
        <position position="118"/>
    </location>
    <ligand>
        <name>[4Fe-4S] cluster</name>
        <dbReference type="ChEBI" id="CHEBI:49883"/>
        <note>4Fe-4S-S-AdoMet</note>
    </ligand>
</feature>
<feature type="binding site" evidence="1">
    <location>
        <begin position="158"/>
        <end position="159"/>
    </location>
    <ligand>
        <name>S-adenosyl-L-methionine</name>
        <dbReference type="ChEBI" id="CHEBI:59789"/>
    </ligand>
</feature>
<feature type="binding site" evidence="1">
    <location>
        <position position="190"/>
    </location>
    <ligand>
        <name>S-adenosyl-L-methionine</name>
        <dbReference type="ChEBI" id="CHEBI:59789"/>
    </ligand>
</feature>
<feature type="binding site" evidence="1">
    <location>
        <begin position="213"/>
        <end position="215"/>
    </location>
    <ligand>
        <name>S-adenosyl-L-methionine</name>
        <dbReference type="ChEBI" id="CHEBI:59789"/>
    </ligand>
</feature>
<feature type="binding site" evidence="1">
    <location>
        <position position="289"/>
    </location>
    <ligand>
        <name>S-adenosyl-L-methionine</name>
        <dbReference type="ChEBI" id="CHEBI:59789"/>
    </ligand>
</feature>
<feature type="disulfide bond" description="(transient)" evidence="1">
    <location>
        <begin position="104"/>
        <end position="332"/>
    </location>
</feature>
<gene>
    <name evidence="1" type="primary">rlmN</name>
    <name type="ordered locus">EUBELI_00719</name>
</gene>
<accession>C4Z523</accession>
<name>RLMN_LACE2</name>
<evidence type="ECO:0000255" key="1">
    <source>
        <dbReference type="HAMAP-Rule" id="MF_01849"/>
    </source>
</evidence>
<evidence type="ECO:0000255" key="2">
    <source>
        <dbReference type="PROSITE-ProRule" id="PRU01266"/>
    </source>
</evidence>
<keyword id="KW-0004">4Fe-4S</keyword>
<keyword id="KW-0963">Cytoplasm</keyword>
<keyword id="KW-1015">Disulfide bond</keyword>
<keyword id="KW-0408">Iron</keyword>
<keyword id="KW-0411">Iron-sulfur</keyword>
<keyword id="KW-0479">Metal-binding</keyword>
<keyword id="KW-0489">Methyltransferase</keyword>
<keyword id="KW-1185">Reference proteome</keyword>
<keyword id="KW-0698">rRNA processing</keyword>
<keyword id="KW-0949">S-adenosyl-L-methionine</keyword>
<keyword id="KW-0808">Transferase</keyword>
<keyword id="KW-0819">tRNA processing</keyword>
<proteinExistence type="inferred from homology"/>
<reference key="1">
    <citation type="journal article" date="2009" name="Proc. Natl. Acad. Sci. U.S.A.">
        <title>Characterizing a model human gut microbiota composed of members of its two dominant bacterial phyla.</title>
        <authorList>
            <person name="Mahowald M.A."/>
            <person name="Rey F.E."/>
            <person name="Seedorf H."/>
            <person name="Turnbaugh P.J."/>
            <person name="Fulton R.S."/>
            <person name="Wollam A."/>
            <person name="Shah N."/>
            <person name="Wang C."/>
            <person name="Magrini V."/>
            <person name="Wilson R.K."/>
            <person name="Cantarel B.L."/>
            <person name="Coutinho P.M."/>
            <person name="Henrissat B."/>
            <person name="Crock L.W."/>
            <person name="Russell A."/>
            <person name="Verberkmoes N.C."/>
            <person name="Hettich R.L."/>
            <person name="Gordon J.I."/>
        </authorList>
    </citation>
    <scope>NUCLEOTIDE SEQUENCE [LARGE SCALE GENOMIC DNA]</scope>
    <source>
        <strain>ATCC 27750 / DSM 3376 / VPI C15-48 / C15-B4</strain>
    </source>
</reference>
<comment type="function">
    <text evidence="1">Specifically methylates position 2 of adenine 2503 in 23S rRNA and position 2 of adenine 37 in tRNAs.</text>
</comment>
<comment type="catalytic activity">
    <reaction evidence="1">
        <text>adenosine(2503) in 23S rRNA + 2 reduced [2Fe-2S]-[ferredoxin] + 2 S-adenosyl-L-methionine = 2-methyladenosine(2503) in 23S rRNA + 5'-deoxyadenosine + L-methionine + 2 oxidized [2Fe-2S]-[ferredoxin] + S-adenosyl-L-homocysteine</text>
        <dbReference type="Rhea" id="RHEA:42916"/>
        <dbReference type="Rhea" id="RHEA-COMP:10000"/>
        <dbReference type="Rhea" id="RHEA-COMP:10001"/>
        <dbReference type="Rhea" id="RHEA-COMP:10152"/>
        <dbReference type="Rhea" id="RHEA-COMP:10282"/>
        <dbReference type="ChEBI" id="CHEBI:17319"/>
        <dbReference type="ChEBI" id="CHEBI:33737"/>
        <dbReference type="ChEBI" id="CHEBI:33738"/>
        <dbReference type="ChEBI" id="CHEBI:57844"/>
        <dbReference type="ChEBI" id="CHEBI:57856"/>
        <dbReference type="ChEBI" id="CHEBI:59789"/>
        <dbReference type="ChEBI" id="CHEBI:74411"/>
        <dbReference type="ChEBI" id="CHEBI:74497"/>
        <dbReference type="EC" id="2.1.1.192"/>
    </reaction>
</comment>
<comment type="catalytic activity">
    <reaction evidence="1">
        <text>adenosine(37) in tRNA + 2 reduced [2Fe-2S]-[ferredoxin] + 2 S-adenosyl-L-methionine = 2-methyladenosine(37) in tRNA + 5'-deoxyadenosine + L-methionine + 2 oxidized [2Fe-2S]-[ferredoxin] + S-adenosyl-L-homocysteine</text>
        <dbReference type="Rhea" id="RHEA:43332"/>
        <dbReference type="Rhea" id="RHEA-COMP:10000"/>
        <dbReference type="Rhea" id="RHEA-COMP:10001"/>
        <dbReference type="Rhea" id="RHEA-COMP:10162"/>
        <dbReference type="Rhea" id="RHEA-COMP:10485"/>
        <dbReference type="ChEBI" id="CHEBI:17319"/>
        <dbReference type="ChEBI" id="CHEBI:33737"/>
        <dbReference type="ChEBI" id="CHEBI:33738"/>
        <dbReference type="ChEBI" id="CHEBI:57844"/>
        <dbReference type="ChEBI" id="CHEBI:57856"/>
        <dbReference type="ChEBI" id="CHEBI:59789"/>
        <dbReference type="ChEBI" id="CHEBI:74411"/>
        <dbReference type="ChEBI" id="CHEBI:74497"/>
        <dbReference type="EC" id="2.1.1.192"/>
    </reaction>
</comment>
<comment type="cofactor">
    <cofactor evidence="1">
        <name>[4Fe-4S] cluster</name>
        <dbReference type="ChEBI" id="CHEBI:49883"/>
    </cofactor>
    <text evidence="1">Binds 1 [4Fe-4S] cluster. The cluster is coordinated with 3 cysteines and an exchangeable S-adenosyl-L-methionine.</text>
</comment>
<comment type="subcellular location">
    <subcellularLocation>
        <location evidence="1">Cytoplasm</location>
    </subcellularLocation>
</comment>
<comment type="miscellaneous">
    <text evidence="1">Reaction proceeds by a ping-pong mechanism involving intermediate methylation of a conserved cysteine residue.</text>
</comment>
<comment type="similarity">
    <text evidence="1">Belongs to the radical SAM superfamily. RlmN family.</text>
</comment>